<organism>
    <name type="scientific">Megasorex gigas</name>
    <name type="common">Mexican shrew</name>
    <dbReference type="NCBI Taxonomy" id="268775"/>
    <lineage>
        <taxon>Eukaryota</taxon>
        <taxon>Metazoa</taxon>
        <taxon>Chordata</taxon>
        <taxon>Craniata</taxon>
        <taxon>Vertebrata</taxon>
        <taxon>Euteleostomi</taxon>
        <taxon>Mammalia</taxon>
        <taxon>Eutheria</taxon>
        <taxon>Laurasiatheria</taxon>
        <taxon>Eulipotyphla</taxon>
        <taxon>Soricidae</taxon>
        <taxon>Soricinae</taxon>
        <taxon>Megasorex</taxon>
    </lineage>
</organism>
<name>CYB_MEGGG</name>
<feature type="chain" id="PRO_0000254711" description="Cytochrome b">
    <location>
        <begin position="1"/>
        <end position="379"/>
    </location>
</feature>
<feature type="transmembrane region" description="Helical" evidence="2">
    <location>
        <begin position="33"/>
        <end position="53"/>
    </location>
</feature>
<feature type="transmembrane region" description="Helical" evidence="2">
    <location>
        <begin position="77"/>
        <end position="98"/>
    </location>
</feature>
<feature type="transmembrane region" description="Helical" evidence="2">
    <location>
        <begin position="113"/>
        <end position="133"/>
    </location>
</feature>
<feature type="transmembrane region" description="Helical" evidence="2">
    <location>
        <begin position="178"/>
        <end position="198"/>
    </location>
</feature>
<feature type="transmembrane region" description="Helical" evidence="2">
    <location>
        <begin position="226"/>
        <end position="246"/>
    </location>
</feature>
<feature type="transmembrane region" description="Helical" evidence="2">
    <location>
        <begin position="288"/>
        <end position="308"/>
    </location>
</feature>
<feature type="transmembrane region" description="Helical" evidence="2">
    <location>
        <begin position="320"/>
        <end position="340"/>
    </location>
</feature>
<feature type="transmembrane region" description="Helical" evidence="2">
    <location>
        <begin position="347"/>
        <end position="367"/>
    </location>
</feature>
<feature type="binding site" description="axial binding residue" evidence="2">
    <location>
        <position position="83"/>
    </location>
    <ligand>
        <name>heme b</name>
        <dbReference type="ChEBI" id="CHEBI:60344"/>
        <label>b562</label>
    </ligand>
    <ligandPart>
        <name>Fe</name>
        <dbReference type="ChEBI" id="CHEBI:18248"/>
    </ligandPart>
</feature>
<feature type="binding site" description="axial binding residue" evidence="2">
    <location>
        <position position="97"/>
    </location>
    <ligand>
        <name>heme b</name>
        <dbReference type="ChEBI" id="CHEBI:60344"/>
        <label>b566</label>
    </ligand>
    <ligandPart>
        <name>Fe</name>
        <dbReference type="ChEBI" id="CHEBI:18248"/>
    </ligandPart>
</feature>
<feature type="binding site" description="axial binding residue" evidence="2">
    <location>
        <position position="182"/>
    </location>
    <ligand>
        <name>heme b</name>
        <dbReference type="ChEBI" id="CHEBI:60344"/>
        <label>b562</label>
    </ligand>
    <ligandPart>
        <name>Fe</name>
        <dbReference type="ChEBI" id="CHEBI:18248"/>
    </ligandPart>
</feature>
<feature type="binding site" description="axial binding residue" evidence="2">
    <location>
        <position position="196"/>
    </location>
    <ligand>
        <name>heme b</name>
        <dbReference type="ChEBI" id="CHEBI:60344"/>
        <label>b566</label>
    </ligand>
    <ligandPart>
        <name>Fe</name>
        <dbReference type="ChEBI" id="CHEBI:18248"/>
    </ligandPart>
</feature>
<feature type="binding site" evidence="2">
    <location>
        <position position="201"/>
    </location>
    <ligand>
        <name>a ubiquinone</name>
        <dbReference type="ChEBI" id="CHEBI:16389"/>
    </ligand>
</feature>
<reference key="1">
    <citation type="submission" date="2004-03" db="EMBL/GenBank/DDBJ databases">
        <title>Molecular phylogenetics of the Soricidae (Insectivora, Mammalia) based on mitochondrial cytochrome b gene sequences.</title>
        <authorList>
            <person name="Ohdachi S.D."/>
            <person name="Iwasa M.A."/>
            <person name="Abe H."/>
            <person name="Vogel P."/>
            <person name="Oshida T."/>
            <person name="Lin L.K."/>
            <person name="Hasegawa M."/>
        </authorList>
    </citation>
    <scope>NUCLEOTIDE SEQUENCE [GENOMIC DNA]</scope>
    <source>
        <tissue>Foot</tissue>
    </source>
</reference>
<dbReference type="EMBL" id="AB175150">
    <property type="protein sequence ID" value="BAE92715.1"/>
    <property type="molecule type" value="Genomic_DNA"/>
</dbReference>
<dbReference type="SMR" id="Q1XII1"/>
<dbReference type="GO" id="GO:0005743">
    <property type="term" value="C:mitochondrial inner membrane"/>
    <property type="evidence" value="ECO:0007669"/>
    <property type="project" value="UniProtKB-SubCell"/>
</dbReference>
<dbReference type="GO" id="GO:0045275">
    <property type="term" value="C:respiratory chain complex III"/>
    <property type="evidence" value="ECO:0007669"/>
    <property type="project" value="InterPro"/>
</dbReference>
<dbReference type="GO" id="GO:0046872">
    <property type="term" value="F:metal ion binding"/>
    <property type="evidence" value="ECO:0007669"/>
    <property type="project" value="UniProtKB-KW"/>
</dbReference>
<dbReference type="GO" id="GO:0008121">
    <property type="term" value="F:ubiquinol-cytochrome-c reductase activity"/>
    <property type="evidence" value="ECO:0007669"/>
    <property type="project" value="InterPro"/>
</dbReference>
<dbReference type="GO" id="GO:0006122">
    <property type="term" value="P:mitochondrial electron transport, ubiquinol to cytochrome c"/>
    <property type="evidence" value="ECO:0007669"/>
    <property type="project" value="TreeGrafter"/>
</dbReference>
<dbReference type="CDD" id="cd00290">
    <property type="entry name" value="cytochrome_b_C"/>
    <property type="match status" value="1"/>
</dbReference>
<dbReference type="CDD" id="cd00284">
    <property type="entry name" value="Cytochrome_b_N"/>
    <property type="match status" value="1"/>
</dbReference>
<dbReference type="FunFam" id="1.20.810.10:FF:000002">
    <property type="entry name" value="Cytochrome b"/>
    <property type="match status" value="1"/>
</dbReference>
<dbReference type="Gene3D" id="1.20.810.10">
    <property type="entry name" value="Cytochrome Bc1 Complex, Chain C"/>
    <property type="match status" value="1"/>
</dbReference>
<dbReference type="InterPro" id="IPR005798">
    <property type="entry name" value="Cyt_b/b6_C"/>
</dbReference>
<dbReference type="InterPro" id="IPR036150">
    <property type="entry name" value="Cyt_b/b6_C_sf"/>
</dbReference>
<dbReference type="InterPro" id="IPR005797">
    <property type="entry name" value="Cyt_b/b6_N"/>
</dbReference>
<dbReference type="InterPro" id="IPR027387">
    <property type="entry name" value="Cytb/b6-like_sf"/>
</dbReference>
<dbReference type="InterPro" id="IPR030689">
    <property type="entry name" value="Cytochrome_b"/>
</dbReference>
<dbReference type="InterPro" id="IPR048260">
    <property type="entry name" value="Cytochrome_b_C_euk/bac"/>
</dbReference>
<dbReference type="InterPro" id="IPR048259">
    <property type="entry name" value="Cytochrome_b_N_euk/bac"/>
</dbReference>
<dbReference type="InterPro" id="IPR016174">
    <property type="entry name" value="Di-haem_cyt_TM"/>
</dbReference>
<dbReference type="PANTHER" id="PTHR19271">
    <property type="entry name" value="CYTOCHROME B"/>
    <property type="match status" value="1"/>
</dbReference>
<dbReference type="PANTHER" id="PTHR19271:SF16">
    <property type="entry name" value="CYTOCHROME B"/>
    <property type="match status" value="1"/>
</dbReference>
<dbReference type="Pfam" id="PF00032">
    <property type="entry name" value="Cytochrom_B_C"/>
    <property type="match status" value="1"/>
</dbReference>
<dbReference type="Pfam" id="PF00033">
    <property type="entry name" value="Cytochrome_B"/>
    <property type="match status" value="1"/>
</dbReference>
<dbReference type="PIRSF" id="PIRSF038885">
    <property type="entry name" value="COB"/>
    <property type="match status" value="1"/>
</dbReference>
<dbReference type="SUPFAM" id="SSF81648">
    <property type="entry name" value="a domain/subunit of cytochrome bc1 complex (Ubiquinol-cytochrome c reductase)"/>
    <property type="match status" value="1"/>
</dbReference>
<dbReference type="SUPFAM" id="SSF81342">
    <property type="entry name" value="Transmembrane di-heme cytochromes"/>
    <property type="match status" value="1"/>
</dbReference>
<dbReference type="PROSITE" id="PS51003">
    <property type="entry name" value="CYTB_CTER"/>
    <property type="match status" value="1"/>
</dbReference>
<dbReference type="PROSITE" id="PS51002">
    <property type="entry name" value="CYTB_NTER"/>
    <property type="match status" value="1"/>
</dbReference>
<evidence type="ECO:0000250" key="1"/>
<evidence type="ECO:0000250" key="2">
    <source>
        <dbReference type="UniProtKB" id="P00157"/>
    </source>
</evidence>
<evidence type="ECO:0000255" key="3">
    <source>
        <dbReference type="PROSITE-ProRule" id="PRU00967"/>
    </source>
</evidence>
<evidence type="ECO:0000255" key="4">
    <source>
        <dbReference type="PROSITE-ProRule" id="PRU00968"/>
    </source>
</evidence>
<proteinExistence type="inferred from homology"/>
<keyword id="KW-0249">Electron transport</keyword>
<keyword id="KW-0349">Heme</keyword>
<keyword id="KW-0408">Iron</keyword>
<keyword id="KW-0472">Membrane</keyword>
<keyword id="KW-0479">Metal-binding</keyword>
<keyword id="KW-0496">Mitochondrion</keyword>
<keyword id="KW-0999">Mitochondrion inner membrane</keyword>
<keyword id="KW-0679">Respiratory chain</keyword>
<keyword id="KW-0812">Transmembrane</keyword>
<keyword id="KW-1133">Transmembrane helix</keyword>
<keyword id="KW-0813">Transport</keyword>
<keyword id="KW-0830">Ubiquinone</keyword>
<gene>
    <name type="primary">MT-CYB</name>
    <name type="synonym">COB</name>
    <name type="synonym">CYTB</name>
    <name type="synonym">MTCYB</name>
</gene>
<geneLocation type="mitochondrion"/>
<comment type="function">
    <text evidence="2">Component of the ubiquinol-cytochrome c reductase complex (complex III or cytochrome b-c1 complex) that is part of the mitochondrial respiratory chain. The b-c1 complex mediates electron transfer from ubiquinol to cytochrome c. Contributes to the generation of a proton gradient across the mitochondrial membrane that is then used for ATP synthesis.</text>
</comment>
<comment type="cofactor">
    <cofactor evidence="2">
        <name>heme b</name>
        <dbReference type="ChEBI" id="CHEBI:60344"/>
    </cofactor>
    <text evidence="2">Binds 2 heme b groups non-covalently.</text>
</comment>
<comment type="subunit">
    <text evidence="2">The cytochrome bc1 complex contains 11 subunits: 3 respiratory subunits (MT-CYB, CYC1 and UQCRFS1), 2 core proteins (UQCRC1 and UQCRC2) and 6 low-molecular weight proteins (UQCRH/QCR6, UQCRB/QCR7, UQCRQ/QCR8, UQCR10/QCR9, UQCR11/QCR10 and a cleavage product of UQCRFS1). This cytochrome bc1 complex then forms a dimer.</text>
</comment>
<comment type="subcellular location">
    <subcellularLocation>
        <location evidence="2">Mitochondrion inner membrane</location>
        <topology evidence="2">Multi-pass membrane protein</topology>
    </subcellularLocation>
</comment>
<comment type="miscellaneous">
    <text evidence="1">Heme 1 (or BL or b562) is low-potential and absorbs at about 562 nm, and heme 2 (or BH or b566) is high-potential and absorbs at about 566 nm.</text>
</comment>
<comment type="similarity">
    <text evidence="3 4">Belongs to the cytochrome b family.</text>
</comment>
<comment type="caution">
    <text evidence="2">The full-length protein contains only eight transmembrane helices, not nine as predicted by bioinformatics tools.</text>
</comment>
<accession>Q1XII1</accession>
<protein>
    <recommendedName>
        <fullName>Cytochrome b</fullName>
    </recommendedName>
    <alternativeName>
        <fullName>Complex III subunit 3</fullName>
    </alternativeName>
    <alternativeName>
        <fullName>Complex III subunit III</fullName>
    </alternativeName>
    <alternativeName>
        <fullName>Cytochrome b-c1 complex subunit 3</fullName>
    </alternativeName>
    <alternativeName>
        <fullName>Ubiquinol-cytochrome-c reductase complex cytochrome b subunit</fullName>
    </alternativeName>
</protein>
<sequence>MINIRKTHPLMKIVNNAFIDLPAPSNISSWWNFGSLLGICLIIQILTGLFLAMHYTADTTTAFSSVTHICRDVNYGWLIRYLHANGASMFFICLFLHVGRGLYYGSYLFMETWNIGVLLLFAVMATAFMGYVLPWGQMSFWGATVITNLLSAIPYIGSDLVQWIWGGFSVDKATLTRFFAFHFILPFIIAALAGVHLLFLHETGSNNPTGLQSDADKIPFHPYYTIKDILGVLLLILVLLSLVLFSPDLLGDPDNYTPANPLNTPPHIKPEWYFLFAYAILRSIPNKLGGVLALVLSILILIAAPLLHTAKQRSMMFRPFSQCLFWILVADLLTLTWIGGQPVEHPFIIIGQLASILYFTLILVIMPITSLLENNLLKW</sequence>